<evidence type="ECO:0000255" key="1">
    <source>
        <dbReference type="HAMAP-Rule" id="MF_01460"/>
    </source>
</evidence>
<sequence>MRITLGSRNPEDRRSSFLHMTASAAATSDSDLNTFADWLEGYYSNRAQAMAEPVWFVPVSLWYVRLPHLFSEGIGFFTEQFNEHTPGRFYRSRVLQVLADPLRIENYKLRDQAAWAGASQDLQRLAQLSLSDLQHLPGCRILVEKRADCYHGQMLPGGGCRLNPGDSTYIHIEFDLTAQEFITWDRGFDATTGQQTWGSRAGPYRYQKRIPVVFPPRP</sequence>
<proteinExistence type="inferred from homology"/>
<name>CPXT1_SYNJA</name>
<protein>
    <recommendedName>
        <fullName evidence="1">Chromophore lyase CpcT/CpeT 1</fullName>
        <ecNumber evidence="1">4.-.-.-</ecNumber>
    </recommendedName>
</protein>
<feature type="chain" id="PRO_0000403164" description="Chromophore lyase CpcT/CpeT 1">
    <location>
        <begin position="1"/>
        <end position="218"/>
    </location>
</feature>
<comment type="function">
    <text evidence="1">Covalently attaches a chromophore to Cys residue(s) of phycobiliproteins.</text>
</comment>
<comment type="similarity">
    <text evidence="1">Belongs to the CpcT/CpeT biliprotein lyase family.</text>
</comment>
<accession>Q2JWI9</accession>
<organism>
    <name type="scientific">Synechococcus sp. (strain JA-3-3Ab)</name>
    <name type="common">Cyanobacteria bacterium Yellowstone A-Prime</name>
    <dbReference type="NCBI Taxonomy" id="321327"/>
    <lineage>
        <taxon>Bacteria</taxon>
        <taxon>Bacillati</taxon>
        <taxon>Cyanobacteriota</taxon>
        <taxon>Cyanophyceae</taxon>
        <taxon>Synechococcales</taxon>
        <taxon>Synechococcaceae</taxon>
        <taxon>Synechococcus</taxon>
    </lineage>
</organism>
<reference key="1">
    <citation type="journal article" date="2007" name="ISME J.">
        <title>Population level functional diversity in a microbial community revealed by comparative genomic and metagenomic analyses.</title>
        <authorList>
            <person name="Bhaya D."/>
            <person name="Grossman A.R."/>
            <person name="Steunou A.-S."/>
            <person name="Khuri N."/>
            <person name="Cohan F.M."/>
            <person name="Hamamura N."/>
            <person name="Melendrez M.C."/>
            <person name="Bateson M.M."/>
            <person name="Ward D.M."/>
            <person name="Heidelberg J.F."/>
        </authorList>
    </citation>
    <scope>NUCLEOTIDE SEQUENCE [LARGE SCALE GENOMIC DNA]</scope>
    <source>
        <strain>JA-3-3Ab</strain>
    </source>
</reference>
<gene>
    <name evidence="1" type="primary">cpcT1</name>
    <name type="ordered locus">CYA_0661</name>
</gene>
<dbReference type="EC" id="4.-.-.-" evidence="1"/>
<dbReference type="EMBL" id="CP000239">
    <property type="protein sequence ID" value="ABC98874.1"/>
    <property type="molecule type" value="Genomic_DNA"/>
</dbReference>
<dbReference type="SMR" id="Q2JWI9"/>
<dbReference type="STRING" id="321327.CYA_0661"/>
<dbReference type="KEGG" id="cya:CYA_0661"/>
<dbReference type="eggNOG" id="ENOG502Z877">
    <property type="taxonomic scope" value="Bacteria"/>
</dbReference>
<dbReference type="HOGENOM" id="CLU_092589_0_0_3"/>
<dbReference type="OrthoDB" id="509174at2"/>
<dbReference type="Proteomes" id="UP000008818">
    <property type="component" value="Chromosome"/>
</dbReference>
<dbReference type="GO" id="GO:0016829">
    <property type="term" value="F:lyase activity"/>
    <property type="evidence" value="ECO:0007669"/>
    <property type="project" value="UniProtKB-KW"/>
</dbReference>
<dbReference type="CDD" id="cd16338">
    <property type="entry name" value="CpcT"/>
    <property type="match status" value="1"/>
</dbReference>
<dbReference type="Gene3D" id="2.40.128.590">
    <property type="entry name" value="CpcT/CpeT domain"/>
    <property type="match status" value="1"/>
</dbReference>
<dbReference type="HAMAP" id="MF_01460">
    <property type="entry name" value="Chrphore_lyase_CpxT"/>
    <property type="match status" value="1"/>
</dbReference>
<dbReference type="InterPro" id="IPR010404">
    <property type="entry name" value="CpcT/CpeT"/>
</dbReference>
<dbReference type="InterPro" id="IPR038672">
    <property type="entry name" value="CpcT/CpeT_sf"/>
</dbReference>
<dbReference type="PANTHER" id="PTHR35137">
    <property type="entry name" value="CHROMOPHORE LYASE CRL, CHLOROPLASTIC"/>
    <property type="match status" value="1"/>
</dbReference>
<dbReference type="PANTHER" id="PTHR35137:SF1">
    <property type="entry name" value="CHROMOPHORE LYASE CRL, CHLOROPLASTIC"/>
    <property type="match status" value="1"/>
</dbReference>
<dbReference type="Pfam" id="PF06206">
    <property type="entry name" value="CpeT"/>
    <property type="match status" value="1"/>
</dbReference>
<keyword id="KW-0456">Lyase</keyword>